<evidence type="ECO:0000250" key="1">
    <source>
        <dbReference type="UniProtKB" id="Q0KK55"/>
    </source>
</evidence>
<evidence type="ECO:0000255" key="2"/>
<evidence type="ECO:0000255" key="3">
    <source>
        <dbReference type="PROSITE-ProRule" id="PRU00135"/>
    </source>
</evidence>
<evidence type="ECO:0000255" key="4">
    <source>
        <dbReference type="PROSITE-ProRule" id="PRU00168"/>
    </source>
</evidence>
<evidence type="ECO:0000255" key="5">
    <source>
        <dbReference type="PROSITE-ProRule" id="PRU00709"/>
    </source>
</evidence>
<evidence type="ECO:0000256" key="6">
    <source>
        <dbReference type="SAM" id="MobiDB-lite"/>
    </source>
</evidence>
<evidence type="ECO:0000269" key="7">
    <source>
    </source>
</evidence>
<evidence type="ECO:0000269" key="8">
    <source ref="3"/>
</evidence>
<evidence type="ECO:0000303" key="9">
    <source>
    </source>
</evidence>
<evidence type="ECO:0000303" key="10">
    <source ref="3"/>
</evidence>
<evidence type="ECO:0000303" key="11">
    <source ref="4"/>
</evidence>
<evidence type="ECO:0000305" key="12"/>
<evidence type="ECO:0000312" key="13">
    <source>
        <dbReference type="HGNC" id="HGNC:29374"/>
    </source>
</evidence>
<sequence>MQAMDPAAADLYEEDGKDLDFYDFEPLPTLPEDEENVSLADILSLRDRGLSEQEAWAVCLECSLSMRSVAHAAIFQSLCITPDTLAFNTSGNVCFMEQLSDDPEGAFVPPEFDVTGNTFEAHIYSLGATLKAALEYVAEPTLEPRLSQDLEALLSRMQAEDPGDRPDLESIIALCEEKLQLTSSCRVCRSLSAVGRRVLSIESFGALQDVSESSWRERPAPGNAGPRRPPGDPSTDPEVLPTPEGPESETSRGPRASPTKALLSTPVRNGESHSREGLAGLVLDAERTLGELDRDALRRSRLRKVQTFPRLLSDSPEATLCLPLTRGKSQLPISELFSPDPRKAFLDRKNGLSSFQAQPKCRLWPEQEPEHQLGRVPCAGRSTDRGPGVPGSPGQPETSHPSQGPAEAPADPRDASGEAQTPRDDERIPEGARQLESAAAEQWVSLQDLLSQLGRPFREYELWALCLACLRALQTRPEHPAYLCLDSVLVAEDGAVLFQPPPANGSYDSFFLAPELAEERLVTEKASVYCVAAVLWTAAKFSVPRNHKLALPRRLKTLLLDMARRSAPERPSAAEAIKVCGSYLLQRGMDSRKILAHLRASICQVYQEEETISLQNAFSVVELKPSVAPAPEPSPGFLPVNSDTGLVAVPGPVPGQHPCGEEATQLPAAFTSEATHFKPIVLAQNASVARDQPALAQEESEERGGQREGEGEEKLSLEAHAGSPSLKTPDGPVPGPGPQGAAPEPLGASVQRDSAQGRPCPPPQAPANQPEGASSAAPGSPVPAPPTKASALPVEQGPAEPIPPGVASGGLRPDALGPTTAHHGPRHPPKPPRSKATERPGQEPEGPGATPAGERDDQSPDSVPERPRPADRRLCLPCVDASPLPGRTACPSLQEATRLIQEEFAFDGYLDNGLEALIMGEYIFALKDLTFATFCGAISEKFCDLYWDEKLLQNLFKVVNGQASPSPSTAEEAGSQLEGSQSPRSPSSKRPSLHRLGKEKPAMARTSSRAPCSPTSVSDVDSDALSRGNFEVGFRPQRSVKAERAQQPEAGEDRRPAGGASDVEAVTRLARSKGVGPALSPGPAGFQSCSPGWCSAFYEADCFGADVHNYVKDLGRQQADGALPDAQSPELEQQLMMEKRNYRKTLKFYQKLLQKEKRNKGSDVKTMLSKLKGQLEEMKSRVQFLSLVKKYLQVMYAERWGLEPCTLPVIVNIAAAPCDTLDFSPLDESSSLIFYNVNKHPGGRQKARILQAGTPLGLMAYLYSSDAFLEGYVQQFLYTFRYFCTPHDFLHFLLDRINSTLTRAHQDPTSTFTKIYRRSLCVLQAWVEDCYAVDFPRNSGLLGKLEDFISSKILPLDGSAKHLLGLLEVGMDRRAEGNPRGTDLENPREAEEDARPFNALCKRLSEDGISRKSFPWRLPRGNGLVLPPHKERPYTIAAALPKPCFLEDFYGPCAKTSEKGPYFLTEYSTHQLFSQLTLLQQELFQKCHPVHFLNSRALGVMDKSTAIPKASSSESLSAKTCSLFLPNYVQDKYLLQLLRNADDVSTWVAAEIVTSHTSKLQVNLLSKFLLIAKSCYEQRNFATAMQILSGLEHLAVRQSPAWRILPAKIAEVMEELKAVEVFLKSDSLCLMEGRRFRAQPTLPSAHLLAMHIQQLETGGFTMTNGAHRWSKLRNIAKVVSQVHAFQENPYTFSPDPKLQSYLKQRIARFSGADISTLAADSRANFHQVSSEKHSRKIQDKLRRMKATFQ</sequence>
<proteinExistence type="evidence at protein level"/>
<gene>
    <name evidence="13" type="primary">KNDC1</name>
    <name type="synonym">C10orf23</name>
    <name type="synonym">KIAA1768</name>
    <name type="synonym">RASGEF2</name>
    <name evidence="1" type="synonym">VKIND</name>
    <name evidence="10" type="ORF">hucep-9</name>
</gene>
<feature type="chain" id="PRO_0000307141" description="Kinase non-catalytic C-lobe domain-containing protein 1">
    <location>
        <begin position="1"/>
        <end position="1749"/>
    </location>
</feature>
<feature type="domain" description="KIND 1" evidence="5">
    <location>
        <begin position="37"/>
        <end position="217"/>
    </location>
</feature>
<feature type="domain" description="KIND 2" evidence="5">
    <location>
        <begin position="444"/>
        <end position="608"/>
    </location>
</feature>
<feature type="domain" description="N-terminal Ras-GEF" evidence="3">
    <location>
        <begin position="1246"/>
        <end position="1371"/>
    </location>
</feature>
<feature type="domain" description="Ras-GEF" evidence="4">
    <location>
        <begin position="1468"/>
        <end position="1719"/>
    </location>
</feature>
<feature type="region of interest" description="Disordered" evidence="6">
    <location>
        <begin position="210"/>
        <end position="275"/>
    </location>
</feature>
<feature type="region of interest" description="Disordered" evidence="6">
    <location>
        <begin position="361"/>
        <end position="435"/>
    </location>
</feature>
<feature type="region of interest" description="Disordered" evidence="6">
    <location>
        <begin position="689"/>
        <end position="871"/>
    </location>
</feature>
<feature type="region of interest" description="Disordered" evidence="6">
    <location>
        <begin position="962"/>
        <end position="1061"/>
    </location>
</feature>
<feature type="coiled-coil region" evidence="2">
    <location>
        <begin position="1133"/>
        <end position="1190"/>
    </location>
</feature>
<feature type="compositionally biased region" description="Basic and acidic residues" evidence="6">
    <location>
        <begin position="363"/>
        <end position="373"/>
    </location>
</feature>
<feature type="compositionally biased region" description="Basic and acidic residues" evidence="6">
    <location>
        <begin position="410"/>
        <end position="430"/>
    </location>
</feature>
<feature type="compositionally biased region" description="Basic and acidic residues" evidence="6">
    <location>
        <begin position="702"/>
        <end position="717"/>
    </location>
</feature>
<feature type="compositionally biased region" description="Low complexity" evidence="6">
    <location>
        <begin position="739"/>
        <end position="748"/>
    </location>
</feature>
<feature type="compositionally biased region" description="Low complexity" evidence="6">
    <location>
        <begin position="766"/>
        <end position="779"/>
    </location>
</feature>
<feature type="compositionally biased region" description="Basic residues" evidence="6">
    <location>
        <begin position="823"/>
        <end position="833"/>
    </location>
</feature>
<feature type="compositionally biased region" description="Basic and acidic residues" evidence="6">
    <location>
        <begin position="853"/>
        <end position="871"/>
    </location>
</feature>
<feature type="compositionally biased region" description="Low complexity" evidence="6">
    <location>
        <begin position="980"/>
        <end position="990"/>
    </location>
</feature>
<feature type="compositionally biased region" description="Polar residues" evidence="6">
    <location>
        <begin position="1005"/>
        <end position="1019"/>
    </location>
</feature>
<feature type="compositionally biased region" description="Basic and acidic residues" evidence="6">
    <location>
        <begin position="1040"/>
        <end position="1056"/>
    </location>
</feature>
<feature type="modified residue" description="Phosphoserine" evidence="1">
    <location>
        <position position="964"/>
    </location>
</feature>
<feature type="splice variant" id="VSP_028595" description="In isoform 2." evidence="11">
    <original>ELEQQLMMEKRNYRKTLKFYQKLLQKEKRNKGSDVKTMLSKLKGQLEEMKSRVQFLSLVKKYLQVMYAERWGLEPCTLPVIVNIAAAPCDTLDFSPLDESSSLIFYNVNKHPGGRQKARILQAGTPLGLMAYLYSSDAFLEGYVQQFLYTFRYFCTPHDFLHFLLDRINSTLTRAHQDPTSTFTKIYRRSLCVLQAWVEDCYAVDFPRNSGLLGKLEDFISSKILPLDGSAKHLLGLLEVGMDRRAEGNPRGTDLENPREAEEDARP</original>
    <variation>VSPRPWHCRVGQGVSFQQSFLVTAGDRWHRVPRAPNRVTLVLVPPPRGCQDGQGPLPGLSSTSRDRLVCTGAPGGSTSEDREGLFSHGRPGDGFTGGPSMLVTRLRSVVFSVGQAQPPGPWAASLCSERKHQKRLPSKSRLGLVAAAWSGLSGQQCHPGSGAAATPPWPAGRGGLRPGSPGCRRGLQSSGRKVGPVTHSPDLGCILESPGTPGWMTGGAQWPSAPGTSPTTVCLELSHRGKPPPASGHRSPSWGSSLLLSCRLLACTL</variation>
    <location>
        <begin position="1130"/>
        <end position="1396"/>
    </location>
</feature>
<feature type="splice variant" id="VSP_028598" description="In isoform 2." evidence="11">
    <location>
        <begin position="1397"/>
        <end position="1749"/>
    </location>
</feature>
<feature type="sequence variant" id="VAR_035358" description="In dbSNP:rs3810964." evidence="8">
    <original>E</original>
    <variation>G</variation>
    <location>
        <position position="436"/>
    </location>
</feature>
<feature type="sequence variant" id="VAR_035359" description="In dbSNP:rs35152544.">
    <original>G</original>
    <variation>S</variation>
    <location>
        <position position="581"/>
    </location>
</feature>
<feature type="sequence variant" id="VAR_035360" description="In dbSNP:rs2998139." evidence="8">
    <original>L</original>
    <variation>P</variation>
    <location>
        <position position="717"/>
    </location>
</feature>
<feature type="sequence variant" id="VAR_061786" description="In dbSNP:rs35604376.">
    <original>R</original>
    <variation>W</variation>
    <location>
        <position position="1038"/>
    </location>
</feature>
<feature type="sequence variant" id="VAR_051902" description="In dbSNP:rs11101642.">
    <original>A</original>
    <variation>T</variation>
    <location>
        <position position="1332"/>
    </location>
</feature>
<feature type="sequence conflict" description="In Ref. 3; BAD12625." evidence="12" ref="3">
    <original>L</original>
    <variation>P</variation>
    <location>
        <position position="346"/>
    </location>
</feature>
<feature type="sequence conflict" description="In Ref. 3; BAD12625." evidence="12" ref="3">
    <original>V</original>
    <variation>D</variation>
    <location>
        <position position="806"/>
    </location>
</feature>
<feature type="sequence conflict" description="In Ref. 3; BAD12625." evidence="12" ref="3">
    <original>A</original>
    <variation>G</variation>
    <location>
        <position position="925"/>
    </location>
</feature>
<feature type="sequence conflict" description="In Ref. 3; BAD12625." evidence="12" ref="3">
    <original>E</original>
    <variation>G</variation>
    <location>
        <position position="971"/>
    </location>
</feature>
<feature type="sequence conflict" description="In Ref. 3; BAD12625." evidence="12" ref="3">
    <original>S</original>
    <variation>P</variation>
    <location>
        <position position="1072"/>
    </location>
</feature>
<feature type="sequence conflict" description="In Ref. 3; BAD12625." evidence="12" ref="3">
    <original>A</original>
    <variation>V</variation>
    <location>
        <position position="1084"/>
    </location>
</feature>
<feature type="sequence conflict" description="In Ref. 3; BAD12625." evidence="12" ref="3">
    <original>A</original>
    <variation>T</variation>
    <location>
        <position position="1260"/>
    </location>
</feature>
<feature type="sequence conflict" description="In Ref. 3; BAD12625." evidence="12" ref="3">
    <original>I</original>
    <variation>T</variation>
    <location>
        <position position="1315"/>
    </location>
</feature>
<feature type="sequence conflict" description="In Ref. 3; BAD12625." evidence="12" ref="3">
    <original>S</original>
    <variation>G</variation>
    <location>
        <position position="1468"/>
    </location>
</feature>
<feature type="sequence conflict" description="In Ref. 3; BAD12625." evidence="12" ref="3">
    <original>K</original>
    <variation>R</variation>
    <location>
        <position position="1624"/>
    </location>
</feature>
<name>KNDC1_HUMAN</name>
<comment type="function">
    <text evidence="1 7">RAS-Guanine nucleotide exchange factor (GEF) that controls the negative regulation of neuronal dendrite growth by mediating a signaling pathway linking RAS and MAP2 (By similarity). May be involved in cellular senescence (PubMed:24788352).</text>
</comment>
<comment type="subunit">
    <text evidence="1">Interacts (via KIND2) with MAP2; the interaction enhances MAP2 phosphorylation and localizes KNDC1 to dendrites.</text>
</comment>
<comment type="subcellular location">
    <subcellularLocation>
        <location evidence="1">Cell projection</location>
        <location evidence="1">Dendrite</location>
    </subcellularLocation>
    <subcellularLocation>
        <location evidence="1">Perikaryon</location>
    </subcellularLocation>
</comment>
<comment type="alternative products">
    <event type="alternative splicing"/>
    <isoform>
        <id>Q76NI1-1</id>
        <name>1</name>
        <sequence type="displayed"/>
    </isoform>
    <isoform>
        <id>Q76NI1-4</id>
        <name>2</name>
        <sequence type="described" ref="VSP_028595 VSP_028598"/>
    </isoform>
</comment>
<comment type="tissue specificity">
    <text evidence="8">Expressed specifically in the cerebral cortex.</text>
</comment>
<comment type="sequence caution" evidence="12">
    <conflict type="miscellaneous discrepancy">
        <sequence resource="EMBL-CDS" id="BAB21859"/>
    </conflict>
    <text>Intron retention.</text>
</comment>
<comment type="sequence caution" evidence="12">
    <conflict type="erroneous initiation">
        <sequence resource="EMBL-CDS" id="BAB71561"/>
    </conflict>
    <text>Truncated N-terminus.</text>
</comment>
<comment type="sequence caution" evidence="12">
    <conflict type="erroneous initiation">
        <sequence resource="EMBL-CDS" id="BAD12625"/>
    </conflict>
    <text>Truncated N-terminus.</text>
</comment>
<comment type="sequence caution" evidence="12">
    <conflict type="erroneous initiation">
        <sequence resource="EMBL-CDS" id="BAD18397"/>
    </conflict>
    <text>Truncated N-terminus.</text>
</comment>
<accession>Q76NI1</accession>
<accession>B0QZC5</accession>
<accession>Q5T233</accession>
<accession>Q6ZNH8</accession>
<accession>Q8TEE5</accession>
<accession>Q96LV7</accession>
<accession>Q9C095</accession>
<organism>
    <name type="scientific">Homo sapiens</name>
    <name type="common">Human</name>
    <dbReference type="NCBI Taxonomy" id="9606"/>
    <lineage>
        <taxon>Eukaryota</taxon>
        <taxon>Metazoa</taxon>
        <taxon>Chordata</taxon>
        <taxon>Craniata</taxon>
        <taxon>Vertebrata</taxon>
        <taxon>Euteleostomi</taxon>
        <taxon>Mammalia</taxon>
        <taxon>Eutheria</taxon>
        <taxon>Euarchontoglires</taxon>
        <taxon>Primates</taxon>
        <taxon>Haplorrhini</taxon>
        <taxon>Catarrhini</taxon>
        <taxon>Hominidae</taxon>
        <taxon>Homo</taxon>
    </lineage>
</organism>
<keyword id="KW-0025">Alternative splicing</keyword>
<keyword id="KW-0966">Cell projection</keyword>
<keyword id="KW-0175">Coiled coil</keyword>
<keyword id="KW-0344">Guanine-nucleotide releasing factor</keyword>
<keyword id="KW-0597">Phosphoprotein</keyword>
<keyword id="KW-1267">Proteomics identification</keyword>
<keyword id="KW-1185">Reference proteome</keyword>
<keyword id="KW-0677">Repeat</keyword>
<dbReference type="EMBL" id="AL445199">
    <property type="status" value="NOT_ANNOTATED_CDS"/>
    <property type="molecule type" value="Genomic_DNA"/>
</dbReference>
<dbReference type="EMBL" id="AB051555">
    <property type="protein sequence ID" value="BAB21859.1"/>
    <property type="status" value="ALT_SEQ"/>
    <property type="molecule type" value="mRNA"/>
</dbReference>
<dbReference type="EMBL" id="AB000781">
    <property type="protein sequence ID" value="BAD12625.1"/>
    <property type="status" value="ALT_INIT"/>
    <property type="molecule type" value="mRNA"/>
</dbReference>
<dbReference type="EMBL" id="AK074179">
    <property type="protein sequence ID" value="BAB85005.1"/>
    <property type="molecule type" value="mRNA"/>
</dbReference>
<dbReference type="EMBL" id="AK057756">
    <property type="protein sequence ID" value="BAB71561.1"/>
    <property type="status" value="ALT_INIT"/>
    <property type="molecule type" value="mRNA"/>
</dbReference>
<dbReference type="EMBL" id="AK131205">
    <property type="protein sequence ID" value="BAD18397.1"/>
    <property type="status" value="ALT_INIT"/>
    <property type="molecule type" value="mRNA"/>
</dbReference>
<dbReference type="CCDS" id="CCDS7674.1">
    <molecule id="Q76NI1-1"/>
</dbReference>
<dbReference type="RefSeq" id="NP_689856.6">
    <molecule id="Q76NI1-1"/>
    <property type="nucleotide sequence ID" value="NM_152643.7"/>
</dbReference>
<dbReference type="BioGRID" id="124529">
    <property type="interactions" value="26"/>
</dbReference>
<dbReference type="FunCoup" id="Q76NI1">
    <property type="interactions" value="80"/>
</dbReference>
<dbReference type="IntAct" id="Q76NI1">
    <property type="interactions" value="21"/>
</dbReference>
<dbReference type="MINT" id="Q76NI1"/>
<dbReference type="STRING" id="9606.ENSP00000304437"/>
<dbReference type="GlyGen" id="Q76NI1">
    <property type="glycosylation" value="5 sites, 1 O-linked glycan (2 sites)"/>
</dbReference>
<dbReference type="iPTMnet" id="Q76NI1"/>
<dbReference type="PhosphoSitePlus" id="Q76NI1"/>
<dbReference type="BioMuta" id="KNDC1"/>
<dbReference type="DMDM" id="160013711"/>
<dbReference type="jPOST" id="Q76NI1"/>
<dbReference type="MassIVE" id="Q76NI1"/>
<dbReference type="PaxDb" id="9606-ENSP00000304437"/>
<dbReference type="PeptideAtlas" id="Q76NI1"/>
<dbReference type="ProteomicsDB" id="68693">
    <molecule id="Q76NI1-1"/>
</dbReference>
<dbReference type="ProteomicsDB" id="68696">
    <molecule id="Q76NI1-4"/>
</dbReference>
<dbReference type="Antibodypedia" id="48672">
    <property type="antibodies" value="62 antibodies from 11 providers"/>
</dbReference>
<dbReference type="DNASU" id="85442"/>
<dbReference type="Ensembl" id="ENST00000304613.8">
    <molecule id="Q76NI1-1"/>
    <property type="protein sequence ID" value="ENSP00000304437.3"/>
    <property type="gene ID" value="ENSG00000171798.19"/>
</dbReference>
<dbReference type="Ensembl" id="ENST00000368571.3">
    <molecule id="Q76NI1-4"/>
    <property type="protein sequence ID" value="ENSP00000357560.3"/>
    <property type="gene ID" value="ENSG00000171798.19"/>
</dbReference>
<dbReference type="GeneID" id="85442"/>
<dbReference type="KEGG" id="hsa:85442"/>
<dbReference type="MANE-Select" id="ENST00000304613.8">
    <property type="protein sequence ID" value="ENSP00000304437.3"/>
    <property type="RefSeq nucleotide sequence ID" value="NM_152643.8"/>
    <property type="RefSeq protein sequence ID" value="NP_689856.6"/>
</dbReference>
<dbReference type="UCSC" id="uc001llz.2">
    <molecule id="Q76NI1-1"/>
    <property type="organism name" value="human"/>
</dbReference>
<dbReference type="AGR" id="HGNC:29374"/>
<dbReference type="CTD" id="85442"/>
<dbReference type="DisGeNET" id="85442"/>
<dbReference type="GeneCards" id="KNDC1"/>
<dbReference type="HGNC" id="HGNC:29374">
    <property type="gene designation" value="KNDC1"/>
</dbReference>
<dbReference type="HPA" id="ENSG00000171798">
    <property type="expression patterns" value="Tissue enhanced (brain, pituitary gland)"/>
</dbReference>
<dbReference type="MIM" id="616237">
    <property type="type" value="gene"/>
</dbReference>
<dbReference type="neXtProt" id="NX_Q76NI1"/>
<dbReference type="OpenTargets" id="ENSG00000171798"/>
<dbReference type="PharmGKB" id="PA134983621"/>
<dbReference type="VEuPathDB" id="HostDB:ENSG00000171798"/>
<dbReference type="eggNOG" id="ENOG502QSHW">
    <property type="taxonomic scope" value="Eukaryota"/>
</dbReference>
<dbReference type="GeneTree" id="ENSGT00390000011408"/>
<dbReference type="HOGENOM" id="CLU_003380_0_0_1"/>
<dbReference type="InParanoid" id="Q76NI1"/>
<dbReference type="OMA" id="ASTCKVH"/>
<dbReference type="OrthoDB" id="10254377at2759"/>
<dbReference type="PAN-GO" id="Q76NI1">
    <property type="GO annotations" value="0 GO annotations based on evolutionary models"/>
</dbReference>
<dbReference type="PhylomeDB" id="Q76NI1"/>
<dbReference type="TreeFam" id="TF336009"/>
<dbReference type="PathwayCommons" id="Q76NI1"/>
<dbReference type="SignaLink" id="Q76NI1"/>
<dbReference type="BioGRID-ORCS" id="85442">
    <property type="hits" value="12 hits in 1142 CRISPR screens"/>
</dbReference>
<dbReference type="ChiTaRS" id="KNDC1">
    <property type="organism name" value="human"/>
</dbReference>
<dbReference type="GenomeRNAi" id="85442"/>
<dbReference type="Pharos" id="Q76NI1">
    <property type="development level" value="Tdark"/>
</dbReference>
<dbReference type="PRO" id="PR:Q76NI1"/>
<dbReference type="Proteomes" id="UP000005640">
    <property type="component" value="Chromosome 10"/>
</dbReference>
<dbReference type="RNAct" id="Q76NI1">
    <property type="molecule type" value="protein"/>
</dbReference>
<dbReference type="Bgee" id="ENSG00000171798">
    <property type="expression patterns" value="Expressed in right hemisphere of cerebellum and 140 other cell types or tissues"/>
</dbReference>
<dbReference type="GO" id="GO:0030425">
    <property type="term" value="C:dendrite"/>
    <property type="evidence" value="ECO:0000250"/>
    <property type="project" value="UniProtKB"/>
</dbReference>
<dbReference type="GO" id="GO:0032045">
    <property type="term" value="C:guanyl-nucleotide exchange factor complex"/>
    <property type="evidence" value="ECO:0000250"/>
    <property type="project" value="UniProtKB"/>
</dbReference>
<dbReference type="GO" id="GO:0043025">
    <property type="term" value="C:neuronal cell body"/>
    <property type="evidence" value="ECO:0000250"/>
    <property type="project" value="UniProtKB"/>
</dbReference>
<dbReference type="GO" id="GO:0043204">
    <property type="term" value="C:perikaryon"/>
    <property type="evidence" value="ECO:0007669"/>
    <property type="project" value="UniProtKB-SubCell"/>
</dbReference>
<dbReference type="GO" id="GO:0005085">
    <property type="term" value="F:guanyl-nucleotide exchange factor activity"/>
    <property type="evidence" value="ECO:0000318"/>
    <property type="project" value="GO_Central"/>
</dbReference>
<dbReference type="GO" id="GO:0021707">
    <property type="term" value="P:cerebellar granule cell differentiation"/>
    <property type="evidence" value="ECO:0000250"/>
    <property type="project" value="UniProtKB"/>
</dbReference>
<dbReference type="GO" id="GO:0001934">
    <property type="term" value="P:positive regulation of protein phosphorylation"/>
    <property type="evidence" value="ECO:0000250"/>
    <property type="project" value="UniProtKB"/>
</dbReference>
<dbReference type="GO" id="GO:0050773">
    <property type="term" value="P:regulation of dendrite development"/>
    <property type="evidence" value="ECO:0000250"/>
    <property type="project" value="UniProtKB"/>
</dbReference>
<dbReference type="GO" id="GO:0048814">
    <property type="term" value="P:regulation of dendrite morphogenesis"/>
    <property type="evidence" value="ECO:0000250"/>
    <property type="project" value="UniProtKB"/>
</dbReference>
<dbReference type="GO" id="GO:0007264">
    <property type="term" value="P:small GTPase-mediated signal transduction"/>
    <property type="evidence" value="ECO:0007669"/>
    <property type="project" value="InterPro"/>
</dbReference>
<dbReference type="CDD" id="cd06224">
    <property type="entry name" value="REM"/>
    <property type="match status" value="1"/>
</dbReference>
<dbReference type="FunFam" id="1.10.510.10:FF:000694">
    <property type="entry name" value="Kinase non-catalytic C-lobe domain containing 1"/>
    <property type="match status" value="1"/>
</dbReference>
<dbReference type="FunFam" id="1.10.510.10:FF:000529">
    <property type="entry name" value="Kinase non-catalytic C-lobe domain-containing 1"/>
    <property type="match status" value="1"/>
</dbReference>
<dbReference type="FunFam" id="1.10.840.10:FF:000013">
    <property type="entry name" value="Kinase non-catalytic C-lobe domain-containing 1"/>
    <property type="match status" value="1"/>
</dbReference>
<dbReference type="FunFam" id="1.20.870.10:FF:000014">
    <property type="entry name" value="Kinase non-catalytic C-lobe domain-containing 1"/>
    <property type="match status" value="1"/>
</dbReference>
<dbReference type="Gene3D" id="1.10.840.10">
    <property type="entry name" value="Ras guanine-nucleotide exchange factors catalytic domain"/>
    <property type="match status" value="1"/>
</dbReference>
<dbReference type="Gene3D" id="1.20.870.10">
    <property type="entry name" value="Son of sevenless (SoS) protein Chain: S domain 1"/>
    <property type="match status" value="1"/>
</dbReference>
<dbReference type="Gene3D" id="1.10.510.10">
    <property type="entry name" value="Transferase(Phosphotransferase) domain 1"/>
    <property type="match status" value="2"/>
</dbReference>
<dbReference type="InterPro" id="IPR011009">
    <property type="entry name" value="Kinase-like_dom_sf"/>
</dbReference>
<dbReference type="InterPro" id="IPR011019">
    <property type="entry name" value="KIND_dom"/>
</dbReference>
<dbReference type="InterPro" id="IPR029899">
    <property type="entry name" value="KNDC1"/>
</dbReference>
<dbReference type="InterPro" id="IPR000651">
    <property type="entry name" value="Ras-like_Gua-exchang_fac_N"/>
</dbReference>
<dbReference type="InterPro" id="IPR023578">
    <property type="entry name" value="Ras_GEF_dom_sf"/>
</dbReference>
<dbReference type="InterPro" id="IPR001895">
    <property type="entry name" value="RASGEF_cat_dom"/>
</dbReference>
<dbReference type="InterPro" id="IPR036964">
    <property type="entry name" value="RASGEF_cat_dom_sf"/>
</dbReference>
<dbReference type="PANTHER" id="PTHR21560:SF0">
    <property type="entry name" value="KINASE NON-CATALYTIC C-LOBE DOMAIN-CONTAINING PROTEIN 1"/>
    <property type="match status" value="1"/>
</dbReference>
<dbReference type="PANTHER" id="PTHR21560">
    <property type="entry name" value="VERY KIND PROTEIN"/>
    <property type="match status" value="1"/>
</dbReference>
<dbReference type="Pfam" id="PF16474">
    <property type="entry name" value="KIND"/>
    <property type="match status" value="1"/>
</dbReference>
<dbReference type="Pfam" id="PF00617">
    <property type="entry name" value="RasGEF"/>
    <property type="match status" value="1"/>
</dbReference>
<dbReference type="Pfam" id="PF00618">
    <property type="entry name" value="RasGEF_N"/>
    <property type="match status" value="1"/>
</dbReference>
<dbReference type="SMART" id="SM00750">
    <property type="entry name" value="KIND"/>
    <property type="match status" value="2"/>
</dbReference>
<dbReference type="SMART" id="SM00147">
    <property type="entry name" value="RasGEF"/>
    <property type="match status" value="1"/>
</dbReference>
<dbReference type="SMART" id="SM00229">
    <property type="entry name" value="RasGEFN"/>
    <property type="match status" value="1"/>
</dbReference>
<dbReference type="SUPFAM" id="SSF56112">
    <property type="entry name" value="Protein kinase-like (PK-like)"/>
    <property type="match status" value="1"/>
</dbReference>
<dbReference type="SUPFAM" id="SSF48366">
    <property type="entry name" value="Ras GEF"/>
    <property type="match status" value="1"/>
</dbReference>
<dbReference type="PROSITE" id="PS51377">
    <property type="entry name" value="KIND"/>
    <property type="match status" value="2"/>
</dbReference>
<dbReference type="PROSITE" id="PS50009">
    <property type="entry name" value="RASGEF_CAT"/>
    <property type="match status" value="1"/>
</dbReference>
<dbReference type="PROSITE" id="PS50212">
    <property type="entry name" value="RASGEF_NTER"/>
    <property type="match status" value="1"/>
</dbReference>
<protein>
    <recommendedName>
        <fullName evidence="13">Kinase non-catalytic C-lobe domain-containing protein 1</fullName>
        <shortName evidence="9">KIND domain-containing protein 1</shortName>
    </recommendedName>
    <alternativeName>
        <fullName evidence="10">Cerebral protein 9</fullName>
    </alternativeName>
    <alternativeName>
        <fullName evidence="1">Protein very KIND</fullName>
        <shortName evidence="1">v-KIND</shortName>
    </alternativeName>
    <alternativeName>
        <fullName evidence="13">Ras-GEF domain-containing family member 2</fullName>
    </alternativeName>
</protein>
<reference key="1">
    <citation type="journal article" date="2004" name="Nature">
        <title>The DNA sequence and comparative analysis of human chromosome 10.</title>
        <authorList>
            <person name="Deloukas P."/>
            <person name="Earthrowl M.E."/>
            <person name="Grafham D.V."/>
            <person name="Rubenfield M."/>
            <person name="French L."/>
            <person name="Steward C.A."/>
            <person name="Sims S.K."/>
            <person name="Jones M.C."/>
            <person name="Searle S."/>
            <person name="Scott C."/>
            <person name="Howe K."/>
            <person name="Hunt S.E."/>
            <person name="Andrews T.D."/>
            <person name="Gilbert J.G.R."/>
            <person name="Swarbreck D."/>
            <person name="Ashurst J.L."/>
            <person name="Taylor A."/>
            <person name="Battles J."/>
            <person name="Bird C.P."/>
            <person name="Ainscough R."/>
            <person name="Almeida J.P."/>
            <person name="Ashwell R.I.S."/>
            <person name="Ambrose K.D."/>
            <person name="Babbage A.K."/>
            <person name="Bagguley C.L."/>
            <person name="Bailey J."/>
            <person name="Banerjee R."/>
            <person name="Bates K."/>
            <person name="Beasley H."/>
            <person name="Bray-Allen S."/>
            <person name="Brown A.J."/>
            <person name="Brown J.Y."/>
            <person name="Burford D.C."/>
            <person name="Burrill W."/>
            <person name="Burton J."/>
            <person name="Cahill P."/>
            <person name="Camire D."/>
            <person name="Carter N.P."/>
            <person name="Chapman J.C."/>
            <person name="Clark S.Y."/>
            <person name="Clarke G."/>
            <person name="Clee C.M."/>
            <person name="Clegg S."/>
            <person name="Corby N."/>
            <person name="Coulson A."/>
            <person name="Dhami P."/>
            <person name="Dutta I."/>
            <person name="Dunn M."/>
            <person name="Faulkner L."/>
            <person name="Frankish A."/>
            <person name="Frankland J.A."/>
            <person name="Garner P."/>
            <person name="Garnett J."/>
            <person name="Gribble S."/>
            <person name="Griffiths C."/>
            <person name="Grocock R."/>
            <person name="Gustafson E."/>
            <person name="Hammond S."/>
            <person name="Harley J.L."/>
            <person name="Hart E."/>
            <person name="Heath P.D."/>
            <person name="Ho T.P."/>
            <person name="Hopkins B."/>
            <person name="Horne J."/>
            <person name="Howden P.J."/>
            <person name="Huckle E."/>
            <person name="Hynds C."/>
            <person name="Johnson C."/>
            <person name="Johnson D."/>
            <person name="Kana A."/>
            <person name="Kay M."/>
            <person name="Kimberley A.M."/>
            <person name="Kershaw J.K."/>
            <person name="Kokkinaki M."/>
            <person name="Laird G.K."/>
            <person name="Lawlor S."/>
            <person name="Lee H.M."/>
            <person name="Leongamornlert D.A."/>
            <person name="Laird G."/>
            <person name="Lloyd C."/>
            <person name="Lloyd D.M."/>
            <person name="Loveland J."/>
            <person name="Lovell J."/>
            <person name="McLaren S."/>
            <person name="McLay K.E."/>
            <person name="McMurray A."/>
            <person name="Mashreghi-Mohammadi M."/>
            <person name="Matthews L."/>
            <person name="Milne S."/>
            <person name="Nickerson T."/>
            <person name="Nguyen M."/>
            <person name="Overton-Larty E."/>
            <person name="Palmer S.A."/>
            <person name="Pearce A.V."/>
            <person name="Peck A.I."/>
            <person name="Pelan S."/>
            <person name="Phillimore B."/>
            <person name="Porter K."/>
            <person name="Rice C.M."/>
            <person name="Rogosin A."/>
            <person name="Ross M.T."/>
            <person name="Sarafidou T."/>
            <person name="Sehra H.K."/>
            <person name="Shownkeen R."/>
            <person name="Skuce C.D."/>
            <person name="Smith M."/>
            <person name="Standring L."/>
            <person name="Sycamore N."/>
            <person name="Tester J."/>
            <person name="Thorpe A."/>
            <person name="Torcasso W."/>
            <person name="Tracey A."/>
            <person name="Tromans A."/>
            <person name="Tsolas J."/>
            <person name="Wall M."/>
            <person name="Walsh J."/>
            <person name="Wang H."/>
            <person name="Weinstock K."/>
            <person name="West A.P."/>
            <person name="Willey D.L."/>
            <person name="Whitehead S.L."/>
            <person name="Wilming L."/>
            <person name="Wray P.W."/>
            <person name="Young L."/>
            <person name="Chen Y."/>
            <person name="Lovering R.C."/>
            <person name="Moschonas N.K."/>
            <person name="Siebert R."/>
            <person name="Fechtel K."/>
            <person name="Bentley D."/>
            <person name="Durbin R.M."/>
            <person name="Hubbard T."/>
            <person name="Doucette-Stamm L."/>
            <person name="Beck S."/>
            <person name="Smith D.R."/>
            <person name="Rogers J."/>
        </authorList>
    </citation>
    <scope>NUCLEOTIDE SEQUENCE [LARGE SCALE GENOMIC DNA]</scope>
</reference>
<reference key="2">
    <citation type="journal article" date="2000" name="DNA Res.">
        <title>Prediction of the coding sequences of unidentified human genes. XIX. The complete sequences of 100 new cDNA clones from brain which code for large proteins in vitro.</title>
        <authorList>
            <person name="Nagase T."/>
            <person name="Kikuno R."/>
            <person name="Hattori A."/>
            <person name="Kondo Y."/>
            <person name="Okumura K."/>
            <person name="Ohara O."/>
        </authorList>
    </citation>
    <scope>NUCLEOTIDE SEQUENCE [LARGE SCALE MRNA] OF 35-1193 (ISOFORM 1)</scope>
    <source>
        <tissue>Brain</tissue>
    </source>
</reference>
<reference key="3">
    <citation type="submission" date="1997-01" db="EMBL/GenBank/DDBJ databases">
        <title>Molecular cloning of a novel gene which is specifically expressed in human cerebral cortex.</title>
        <authorList>
            <person name="Yoshimoto M."/>
            <person name="Yazaki M."/>
            <person name="Matsumoto K."/>
            <person name="Takayama K."/>
        </authorList>
    </citation>
    <scope>NUCLEOTIDE SEQUENCE [MRNA] OF 36-1749 (ISOFORM 1)</scope>
    <scope>TISSUE SPECIFICITY</scope>
    <scope>VARIANTS GLY-436 AND PRO-717</scope>
    <source>
        <tissue>Brain cortex</tissue>
    </source>
</reference>
<reference key="4">
    <citation type="submission" date="2002-01" db="EMBL/GenBank/DDBJ databases">
        <title>The nucleotide sequence of a long cDNA clone isolated from human spleen.</title>
        <authorList>
            <person name="Jikuya H."/>
            <person name="Takano J."/>
            <person name="Nomura N."/>
            <person name="Kikuno R."/>
            <person name="Nagase T."/>
            <person name="Ohara O."/>
        </authorList>
    </citation>
    <scope>NUCLEOTIDE SEQUENCE [LARGE SCALE MRNA] OF 579-1749 (ISOFORM 2)</scope>
    <source>
        <tissue>Spleen</tissue>
    </source>
</reference>
<reference key="5">
    <citation type="journal article" date="2004" name="Nat. Genet.">
        <title>Complete sequencing and characterization of 21,243 full-length human cDNAs.</title>
        <authorList>
            <person name="Ota T."/>
            <person name="Suzuki Y."/>
            <person name="Nishikawa T."/>
            <person name="Otsuki T."/>
            <person name="Sugiyama T."/>
            <person name="Irie R."/>
            <person name="Wakamatsu A."/>
            <person name="Hayashi K."/>
            <person name="Sato H."/>
            <person name="Nagai K."/>
            <person name="Kimura K."/>
            <person name="Makita H."/>
            <person name="Sekine M."/>
            <person name="Obayashi M."/>
            <person name="Nishi T."/>
            <person name="Shibahara T."/>
            <person name="Tanaka T."/>
            <person name="Ishii S."/>
            <person name="Yamamoto J."/>
            <person name="Saito K."/>
            <person name="Kawai Y."/>
            <person name="Isono Y."/>
            <person name="Nakamura Y."/>
            <person name="Nagahari K."/>
            <person name="Murakami K."/>
            <person name="Yasuda T."/>
            <person name="Iwayanagi T."/>
            <person name="Wagatsuma M."/>
            <person name="Shiratori A."/>
            <person name="Sudo H."/>
            <person name="Hosoiri T."/>
            <person name="Kaku Y."/>
            <person name="Kodaira H."/>
            <person name="Kondo H."/>
            <person name="Sugawara M."/>
            <person name="Takahashi M."/>
            <person name="Kanda K."/>
            <person name="Yokoi T."/>
            <person name="Furuya T."/>
            <person name="Kikkawa E."/>
            <person name="Omura Y."/>
            <person name="Abe K."/>
            <person name="Kamihara K."/>
            <person name="Katsuta N."/>
            <person name="Sato K."/>
            <person name="Tanikawa M."/>
            <person name="Yamazaki M."/>
            <person name="Ninomiya K."/>
            <person name="Ishibashi T."/>
            <person name="Yamashita H."/>
            <person name="Murakawa K."/>
            <person name="Fujimori K."/>
            <person name="Tanai H."/>
            <person name="Kimata M."/>
            <person name="Watanabe M."/>
            <person name="Hiraoka S."/>
            <person name="Chiba Y."/>
            <person name="Ishida S."/>
            <person name="Ono Y."/>
            <person name="Takiguchi S."/>
            <person name="Watanabe S."/>
            <person name="Yosida M."/>
            <person name="Hotuta T."/>
            <person name="Kusano J."/>
            <person name="Kanehori K."/>
            <person name="Takahashi-Fujii A."/>
            <person name="Hara H."/>
            <person name="Tanase T.-O."/>
            <person name="Nomura Y."/>
            <person name="Togiya S."/>
            <person name="Komai F."/>
            <person name="Hara R."/>
            <person name="Takeuchi K."/>
            <person name="Arita M."/>
            <person name="Imose N."/>
            <person name="Musashino K."/>
            <person name="Yuuki H."/>
            <person name="Oshima A."/>
            <person name="Sasaki N."/>
            <person name="Aotsuka S."/>
            <person name="Yoshikawa Y."/>
            <person name="Matsunawa H."/>
            <person name="Ichihara T."/>
            <person name="Shiohata N."/>
            <person name="Sano S."/>
            <person name="Moriya S."/>
            <person name="Momiyama H."/>
            <person name="Satoh N."/>
            <person name="Takami S."/>
            <person name="Terashima Y."/>
            <person name="Suzuki O."/>
            <person name="Nakagawa S."/>
            <person name="Senoh A."/>
            <person name="Mizoguchi H."/>
            <person name="Goto Y."/>
            <person name="Shimizu F."/>
            <person name="Wakebe H."/>
            <person name="Hishigaki H."/>
            <person name="Watanabe T."/>
            <person name="Sugiyama A."/>
            <person name="Takemoto M."/>
            <person name="Kawakami B."/>
            <person name="Yamazaki M."/>
            <person name="Watanabe K."/>
            <person name="Kumagai A."/>
            <person name="Itakura S."/>
            <person name="Fukuzumi Y."/>
            <person name="Fujimori Y."/>
            <person name="Komiyama M."/>
            <person name="Tashiro H."/>
            <person name="Tanigami A."/>
            <person name="Fujiwara T."/>
            <person name="Ono T."/>
            <person name="Yamada K."/>
            <person name="Fujii Y."/>
            <person name="Ozaki K."/>
            <person name="Hirao M."/>
            <person name="Ohmori Y."/>
            <person name="Kawabata A."/>
            <person name="Hikiji T."/>
            <person name="Kobatake N."/>
            <person name="Inagaki H."/>
            <person name="Ikema Y."/>
            <person name="Okamoto S."/>
            <person name="Okitani R."/>
            <person name="Kawakami T."/>
            <person name="Noguchi S."/>
            <person name="Itoh T."/>
            <person name="Shigeta K."/>
            <person name="Senba T."/>
            <person name="Matsumura K."/>
            <person name="Nakajima Y."/>
            <person name="Mizuno T."/>
            <person name="Morinaga M."/>
            <person name="Sasaki M."/>
            <person name="Togashi T."/>
            <person name="Oyama M."/>
            <person name="Hata H."/>
            <person name="Watanabe M."/>
            <person name="Komatsu T."/>
            <person name="Mizushima-Sugano J."/>
            <person name="Satoh T."/>
            <person name="Shirai Y."/>
            <person name="Takahashi Y."/>
            <person name="Nakagawa K."/>
            <person name="Okumura K."/>
            <person name="Nagase T."/>
            <person name="Nomura N."/>
            <person name="Kikuchi H."/>
            <person name="Masuho Y."/>
            <person name="Yamashita R."/>
            <person name="Nakai K."/>
            <person name="Yada T."/>
            <person name="Nakamura Y."/>
            <person name="Ohara O."/>
            <person name="Isogai T."/>
            <person name="Sugano S."/>
        </authorList>
    </citation>
    <scope>NUCLEOTIDE SEQUENCE [LARGE SCALE MRNA] OF 1241-1749 (ISOFORM 1)</scope>
    <source>
        <tissue>Brain</tissue>
        <tissue>Cerebellum</tissue>
    </source>
</reference>
<reference key="6">
    <citation type="journal article" date="2014" name="Mol. Med. Report.">
        <title>KNDC1 knockdown protects human umbilical vein endothelial cells from senescence.</title>
        <authorList>
            <person name="Zhang C."/>
            <person name="Zhen Y.Z."/>
            <person name="Lin Y.J."/>
            <person name="Liu J."/>
            <person name="Wei J."/>
            <person name="Xu R."/>
            <person name="Hu G."/>
        </authorList>
    </citation>
    <scope>FUNCTION</scope>
</reference>